<accession>Q2VPH1</accession>
<accession>Q8AVT5</accession>
<proteinExistence type="evidence at transcript level"/>
<protein>
    <recommendedName>
        <fullName>Protein FAM50A-A</fullName>
    </recommendedName>
</protein>
<feature type="chain" id="PRO_0000326509" description="Protein FAM50A-A">
    <location>
        <begin position="1"/>
        <end position="340"/>
    </location>
</feature>
<feature type="region of interest" description="Disordered" evidence="3">
    <location>
        <begin position="1"/>
        <end position="22"/>
    </location>
</feature>
<feature type="region of interest" description="Disordered" evidence="3">
    <location>
        <begin position="123"/>
        <end position="178"/>
    </location>
</feature>
<feature type="compositionally biased region" description="Acidic residues" evidence="3">
    <location>
        <begin position="124"/>
        <end position="146"/>
    </location>
</feature>
<feature type="compositionally biased region" description="Basic and acidic residues" evidence="3">
    <location>
        <begin position="169"/>
        <end position="178"/>
    </location>
</feature>
<feature type="sequence conflict" description="In Ref. 1; AAH41272." evidence="4" ref="1">
    <location>
        <position position="156"/>
    </location>
</feature>
<name>F50AA_XENLA</name>
<reference key="1">
    <citation type="submission" date="2005-11" db="EMBL/GenBank/DDBJ databases">
        <authorList>
            <consortium name="NIH - Xenopus Gene Collection (XGC) project"/>
        </authorList>
    </citation>
    <scope>NUCLEOTIDE SEQUENCE [LARGE SCALE MRNA]</scope>
    <source>
        <tissue>Eye</tissue>
        <tissue>Neurula</tissue>
    </source>
</reference>
<keyword id="KW-0507">mRNA processing</keyword>
<keyword id="KW-0508">mRNA splicing</keyword>
<keyword id="KW-0539">Nucleus</keyword>
<keyword id="KW-1185">Reference proteome</keyword>
<evidence type="ECO:0000250" key="1">
    <source>
        <dbReference type="UniProtKB" id="Q14320"/>
    </source>
</evidence>
<evidence type="ECO:0000250" key="2">
    <source>
        <dbReference type="UniProtKB" id="Q568K9"/>
    </source>
</evidence>
<evidence type="ECO:0000256" key="3">
    <source>
        <dbReference type="SAM" id="MobiDB-lite"/>
    </source>
</evidence>
<evidence type="ECO:0000305" key="4"/>
<organism>
    <name type="scientific">Xenopus laevis</name>
    <name type="common">African clawed frog</name>
    <dbReference type="NCBI Taxonomy" id="8355"/>
    <lineage>
        <taxon>Eukaryota</taxon>
        <taxon>Metazoa</taxon>
        <taxon>Chordata</taxon>
        <taxon>Craniata</taxon>
        <taxon>Vertebrata</taxon>
        <taxon>Euteleostomi</taxon>
        <taxon>Amphibia</taxon>
        <taxon>Batrachia</taxon>
        <taxon>Anura</taxon>
        <taxon>Pipoidea</taxon>
        <taxon>Pipidae</taxon>
        <taxon>Xenopodinae</taxon>
        <taxon>Xenopus</taxon>
        <taxon>Xenopus</taxon>
    </lineage>
</organism>
<dbReference type="EMBL" id="BC041272">
    <property type="protein sequence ID" value="AAH41272.1"/>
    <property type="molecule type" value="mRNA"/>
</dbReference>
<dbReference type="EMBL" id="BC108795">
    <property type="protein sequence ID" value="AAI08796.1"/>
    <property type="molecule type" value="mRNA"/>
</dbReference>
<dbReference type="RefSeq" id="NP_001080084.1">
    <property type="nucleotide sequence ID" value="NM_001086615.1"/>
</dbReference>
<dbReference type="SMR" id="Q2VPH1"/>
<dbReference type="DNASU" id="379776"/>
<dbReference type="GeneID" id="379776"/>
<dbReference type="KEGG" id="xla:379776"/>
<dbReference type="AGR" id="Xenbase:XB-GENE-970300"/>
<dbReference type="CTD" id="379776"/>
<dbReference type="OrthoDB" id="1562195at2759"/>
<dbReference type="Proteomes" id="UP000186698">
    <property type="component" value="Chromosome 8L"/>
</dbReference>
<dbReference type="Bgee" id="379776">
    <property type="expression patterns" value="Expressed in lung and 19 other cell types or tissues"/>
</dbReference>
<dbReference type="GO" id="GO:0005634">
    <property type="term" value="C:nucleus"/>
    <property type="evidence" value="ECO:0000318"/>
    <property type="project" value="GO_Central"/>
</dbReference>
<dbReference type="GO" id="GO:0006325">
    <property type="term" value="P:chromatin organization"/>
    <property type="evidence" value="ECO:0000318"/>
    <property type="project" value="GO_Central"/>
</dbReference>
<dbReference type="GO" id="GO:0006397">
    <property type="term" value="P:mRNA processing"/>
    <property type="evidence" value="ECO:0007669"/>
    <property type="project" value="UniProtKB-KW"/>
</dbReference>
<dbReference type="GO" id="GO:0008380">
    <property type="term" value="P:RNA splicing"/>
    <property type="evidence" value="ECO:0007669"/>
    <property type="project" value="UniProtKB-KW"/>
</dbReference>
<dbReference type="InterPro" id="IPR048337">
    <property type="entry name" value="FAM50A/XAP5_C"/>
</dbReference>
<dbReference type="InterPro" id="IPR007005">
    <property type="entry name" value="XAP5"/>
</dbReference>
<dbReference type="PANTHER" id="PTHR12722:SF0">
    <property type="entry name" value="PROTEIN FAM50A"/>
    <property type="match status" value="1"/>
</dbReference>
<dbReference type="PANTHER" id="PTHR12722">
    <property type="entry name" value="XAP-5 PROTEIN-RELATED"/>
    <property type="match status" value="1"/>
</dbReference>
<dbReference type="Pfam" id="PF04921">
    <property type="entry name" value="XAP5"/>
    <property type="match status" value="1"/>
</dbReference>
<comment type="function">
    <text evidence="2">Probably involved in the regulation of pre-mRNA splicing.</text>
</comment>
<comment type="subcellular location">
    <subcellularLocation>
        <location evidence="1">Nucleus</location>
    </subcellularLocation>
</comment>
<sequence>MAQYKGAASEAGRAMQLMKKREKQREQLEQMKLKIAEENVVKANINKKFSAHYDAVEAELKSSTVGLVTLNDMKAKQEALVKEREKQLAKKEQFKDLQLMLEKQRERERKKEQKRKIASLSFNLEEDEECEDEEGEEEESDKEDPPEEKKKKKKKKLGKNPDVDTSFLPDRDREEEENRLREELRQEWEHKQEKIKSEEIEITFSYWDGSGHRRTVKMKKGNSIQQFLQKALESLRKDFSELRSAGVEQLMYIKEDLIIPHHHSFYDFIVTKARGKSGPLFNFDVHEDVRLLSDATVEKDESHAGKVVLRSWYEKNKHIFPASRWEPYDPEKKWDKYTIR</sequence>
<gene>
    <name type="primary">fam50a-a</name>
    <name type="synonym">fam50-a</name>
</gene>